<gene>
    <name evidence="1" type="primary">pyrF</name>
    <name type="ordered locus">SGO_1254</name>
</gene>
<name>PYRF_STRGC</name>
<organism>
    <name type="scientific">Streptococcus gordonii (strain Challis / ATCC 35105 / BCRC 15272 / CH1 / DL1 / V288)</name>
    <dbReference type="NCBI Taxonomy" id="467705"/>
    <lineage>
        <taxon>Bacteria</taxon>
        <taxon>Bacillati</taxon>
        <taxon>Bacillota</taxon>
        <taxon>Bacilli</taxon>
        <taxon>Lactobacillales</taxon>
        <taxon>Streptococcaceae</taxon>
        <taxon>Streptococcus</taxon>
    </lineage>
</organism>
<reference key="1">
    <citation type="journal article" date="2007" name="J. Bacteriol.">
        <title>Genome-wide transcriptional changes in Streptococcus gordonii in response to competence signaling peptide.</title>
        <authorList>
            <person name="Vickerman M.M."/>
            <person name="Iobst S."/>
            <person name="Jesionowski A.M."/>
            <person name="Gill S.R."/>
        </authorList>
    </citation>
    <scope>NUCLEOTIDE SEQUENCE [LARGE SCALE GENOMIC DNA]</scope>
    <source>
        <strain>Challis / ATCC 35105 / BCRC 15272 / CH1 / DL1 / V288</strain>
    </source>
</reference>
<feature type="chain" id="PRO_1000085496" description="Orotidine 5'-phosphate decarboxylase">
    <location>
        <begin position="1"/>
        <end position="230"/>
    </location>
</feature>
<feature type="active site" description="Proton donor" evidence="1">
    <location>
        <position position="63"/>
    </location>
</feature>
<feature type="binding site" evidence="1">
    <location>
        <position position="11"/>
    </location>
    <ligand>
        <name>substrate</name>
    </ligand>
</feature>
<feature type="binding site" evidence="1">
    <location>
        <position position="34"/>
    </location>
    <ligand>
        <name>substrate</name>
    </ligand>
</feature>
<feature type="binding site" evidence="1">
    <location>
        <begin position="61"/>
        <end position="70"/>
    </location>
    <ligand>
        <name>substrate</name>
    </ligand>
</feature>
<feature type="binding site" evidence="1">
    <location>
        <position position="117"/>
    </location>
    <ligand>
        <name>substrate</name>
    </ligand>
</feature>
<feature type="binding site" evidence="1">
    <location>
        <position position="179"/>
    </location>
    <ligand>
        <name>substrate</name>
    </ligand>
</feature>
<feature type="binding site" evidence="1">
    <location>
        <position position="188"/>
    </location>
    <ligand>
        <name>substrate</name>
    </ligand>
</feature>
<feature type="binding site" evidence="1">
    <location>
        <position position="208"/>
    </location>
    <ligand>
        <name>substrate</name>
    </ligand>
</feature>
<feature type="binding site" evidence="1">
    <location>
        <position position="209"/>
    </location>
    <ligand>
        <name>substrate</name>
    </ligand>
</feature>
<sequence length="230" mass="25495">MREERPIIALDFPSFDDVKAFLEHFPEDEKLFVKIGMEFFYAIGPEIVHYLKGLGHSIFLDLKLHDIPNTVRSAMSVLGTFGIDMVTVHAAGGVEMMSEAKKVLGDKAKLVAVTQLTSTSEEDMRDCQNIQTTVQESVVNYARKAKEAGLDGVVCSAQEVELIKAATAEDFLCVTPGIRPAGSEIGDQKRVMTPQEAHQIGSDYIVVGRPIIQAENPWDAYHEIKKQWNS</sequence>
<accession>A8AXM8</accession>
<dbReference type="EC" id="4.1.1.23" evidence="1"/>
<dbReference type="EMBL" id="CP000725">
    <property type="protein sequence ID" value="ABV10863.1"/>
    <property type="molecule type" value="Genomic_DNA"/>
</dbReference>
<dbReference type="RefSeq" id="WP_012000649.1">
    <property type="nucleotide sequence ID" value="NC_009785.1"/>
</dbReference>
<dbReference type="SMR" id="A8AXM8"/>
<dbReference type="STRING" id="467705.SGO_1254"/>
<dbReference type="KEGG" id="sgo:SGO_1254"/>
<dbReference type="eggNOG" id="COG0284">
    <property type="taxonomic scope" value="Bacteria"/>
</dbReference>
<dbReference type="HOGENOM" id="CLU_067069_1_1_9"/>
<dbReference type="UniPathway" id="UPA00070">
    <property type="reaction ID" value="UER00120"/>
</dbReference>
<dbReference type="Proteomes" id="UP000001131">
    <property type="component" value="Chromosome"/>
</dbReference>
<dbReference type="GO" id="GO:0005829">
    <property type="term" value="C:cytosol"/>
    <property type="evidence" value="ECO:0007669"/>
    <property type="project" value="TreeGrafter"/>
</dbReference>
<dbReference type="GO" id="GO:0004590">
    <property type="term" value="F:orotidine-5'-phosphate decarboxylase activity"/>
    <property type="evidence" value="ECO:0007669"/>
    <property type="project" value="UniProtKB-UniRule"/>
</dbReference>
<dbReference type="GO" id="GO:0006207">
    <property type="term" value="P:'de novo' pyrimidine nucleobase biosynthetic process"/>
    <property type="evidence" value="ECO:0007669"/>
    <property type="project" value="InterPro"/>
</dbReference>
<dbReference type="GO" id="GO:0044205">
    <property type="term" value="P:'de novo' UMP biosynthetic process"/>
    <property type="evidence" value="ECO:0007669"/>
    <property type="project" value="UniProtKB-UniRule"/>
</dbReference>
<dbReference type="CDD" id="cd04725">
    <property type="entry name" value="OMP_decarboxylase_like"/>
    <property type="match status" value="1"/>
</dbReference>
<dbReference type="FunFam" id="3.20.20.70:FF:000015">
    <property type="entry name" value="Orotidine 5'-phosphate decarboxylase"/>
    <property type="match status" value="1"/>
</dbReference>
<dbReference type="Gene3D" id="3.20.20.70">
    <property type="entry name" value="Aldolase class I"/>
    <property type="match status" value="1"/>
</dbReference>
<dbReference type="HAMAP" id="MF_01200_B">
    <property type="entry name" value="OMPdecase_type1_B"/>
    <property type="match status" value="1"/>
</dbReference>
<dbReference type="InterPro" id="IPR013785">
    <property type="entry name" value="Aldolase_TIM"/>
</dbReference>
<dbReference type="InterPro" id="IPR014732">
    <property type="entry name" value="OMPdecase"/>
</dbReference>
<dbReference type="InterPro" id="IPR018089">
    <property type="entry name" value="OMPdecase_AS"/>
</dbReference>
<dbReference type="InterPro" id="IPR047596">
    <property type="entry name" value="OMPdecase_bac"/>
</dbReference>
<dbReference type="InterPro" id="IPR001754">
    <property type="entry name" value="OMPdeCOase_dom"/>
</dbReference>
<dbReference type="InterPro" id="IPR011060">
    <property type="entry name" value="RibuloseP-bd_barrel"/>
</dbReference>
<dbReference type="NCBIfam" id="NF001273">
    <property type="entry name" value="PRK00230.1"/>
    <property type="match status" value="1"/>
</dbReference>
<dbReference type="NCBIfam" id="TIGR01740">
    <property type="entry name" value="pyrF"/>
    <property type="match status" value="1"/>
</dbReference>
<dbReference type="PANTHER" id="PTHR32119">
    <property type="entry name" value="OROTIDINE 5'-PHOSPHATE DECARBOXYLASE"/>
    <property type="match status" value="1"/>
</dbReference>
<dbReference type="PANTHER" id="PTHR32119:SF2">
    <property type="entry name" value="OROTIDINE 5'-PHOSPHATE DECARBOXYLASE"/>
    <property type="match status" value="1"/>
</dbReference>
<dbReference type="Pfam" id="PF00215">
    <property type="entry name" value="OMPdecase"/>
    <property type="match status" value="1"/>
</dbReference>
<dbReference type="SMART" id="SM00934">
    <property type="entry name" value="OMPdecase"/>
    <property type="match status" value="1"/>
</dbReference>
<dbReference type="SUPFAM" id="SSF51366">
    <property type="entry name" value="Ribulose-phoshate binding barrel"/>
    <property type="match status" value="1"/>
</dbReference>
<dbReference type="PROSITE" id="PS00156">
    <property type="entry name" value="OMPDECASE"/>
    <property type="match status" value="1"/>
</dbReference>
<comment type="function">
    <text evidence="1">Catalyzes the decarboxylation of orotidine 5'-monophosphate (OMP) to uridine 5'-monophosphate (UMP).</text>
</comment>
<comment type="catalytic activity">
    <reaction evidence="1">
        <text>orotidine 5'-phosphate + H(+) = UMP + CO2</text>
        <dbReference type="Rhea" id="RHEA:11596"/>
        <dbReference type="ChEBI" id="CHEBI:15378"/>
        <dbReference type="ChEBI" id="CHEBI:16526"/>
        <dbReference type="ChEBI" id="CHEBI:57538"/>
        <dbReference type="ChEBI" id="CHEBI:57865"/>
        <dbReference type="EC" id="4.1.1.23"/>
    </reaction>
</comment>
<comment type="pathway">
    <text evidence="1">Pyrimidine metabolism; UMP biosynthesis via de novo pathway; UMP from orotate: step 2/2.</text>
</comment>
<comment type="subunit">
    <text evidence="1">Homodimer.</text>
</comment>
<comment type="similarity">
    <text evidence="1">Belongs to the OMP decarboxylase family. Type 1 subfamily.</text>
</comment>
<protein>
    <recommendedName>
        <fullName evidence="1">Orotidine 5'-phosphate decarboxylase</fullName>
        <ecNumber evidence="1">4.1.1.23</ecNumber>
    </recommendedName>
    <alternativeName>
        <fullName evidence="1">OMP decarboxylase</fullName>
        <shortName evidence="1">OMPDCase</shortName>
        <shortName evidence="1">OMPdecase</shortName>
    </alternativeName>
</protein>
<evidence type="ECO:0000255" key="1">
    <source>
        <dbReference type="HAMAP-Rule" id="MF_01200"/>
    </source>
</evidence>
<proteinExistence type="inferred from homology"/>
<keyword id="KW-0210">Decarboxylase</keyword>
<keyword id="KW-0456">Lyase</keyword>
<keyword id="KW-0665">Pyrimidine biosynthesis</keyword>
<keyword id="KW-1185">Reference proteome</keyword>